<proteinExistence type="inferred from homology"/>
<feature type="chain" id="PRO_0000193625" description="Mitochondrial import inner membrane translocase subunit Tim13">
    <location>
        <begin position="1"/>
        <end position="95"/>
    </location>
</feature>
<feature type="short sequence motif" description="Twin CX3C motif">
    <location>
        <begin position="46"/>
        <end position="69"/>
    </location>
</feature>
<feature type="modified residue" description="N-acetylmethionine" evidence="3">
    <location>
        <position position="1"/>
    </location>
</feature>
<feature type="modified residue" description="Phosphoserine" evidence="3">
    <location>
        <position position="7"/>
    </location>
</feature>
<feature type="modified residue" description="N6-succinyllysine" evidence="2">
    <location>
        <position position="53"/>
    </location>
</feature>
<feature type="disulfide bond" evidence="1">
    <location>
        <begin position="46"/>
        <end position="69"/>
    </location>
</feature>
<feature type="disulfide bond" evidence="1">
    <location>
        <begin position="50"/>
        <end position="65"/>
    </location>
</feature>
<sequence>MDSGFGSDFGGTGGGKLDPGAIMEQVKVQIAVANAQELLQRMTDKCFRKCIGKPGGSLDNSEQKCIAMCMDRYMDAWNTVSRAYNSRLQRERANM</sequence>
<reference key="1">
    <citation type="journal article" date="1999" name="FEBS Lett.">
        <title>The mitochondrial TIM22 preprotein translocase is highly conserved throughout the eukaryotic kingdom.</title>
        <authorList>
            <person name="Bauer M.F."/>
            <person name="Rothbauer U."/>
            <person name="Muehlenbein N."/>
            <person name="Smith R.J.H."/>
            <person name="Gerbitz K.-D."/>
            <person name="Neupert W."/>
            <person name="Brunner M."/>
            <person name="Hofmann S."/>
        </authorList>
    </citation>
    <scope>NUCLEOTIDE SEQUENCE [MRNA]</scope>
</reference>
<dbReference type="EMBL" id="AF144701">
    <property type="protein sequence ID" value="AAD39952.1"/>
    <property type="molecule type" value="mRNA"/>
</dbReference>
<dbReference type="RefSeq" id="NP_665724.1">
    <property type="nucleotide sequence ID" value="NM_145781.2"/>
</dbReference>
<dbReference type="RefSeq" id="XP_063119094.1">
    <property type="nucleotide sequence ID" value="XM_063263024.1"/>
</dbReference>
<dbReference type="SMR" id="P62076"/>
<dbReference type="FunCoup" id="P62076">
    <property type="interactions" value="2874"/>
</dbReference>
<dbReference type="STRING" id="10116.ENSRNOP00000026648"/>
<dbReference type="PhosphoSitePlus" id="P62076"/>
<dbReference type="jPOST" id="P62076"/>
<dbReference type="PaxDb" id="10116-ENSRNOP00000026648"/>
<dbReference type="GeneID" id="252928"/>
<dbReference type="KEGG" id="rno:252928"/>
<dbReference type="UCSC" id="RGD:628845">
    <property type="organism name" value="rat"/>
</dbReference>
<dbReference type="AGR" id="RGD:628845"/>
<dbReference type="CTD" id="26517"/>
<dbReference type="RGD" id="628845">
    <property type="gene designation" value="Timm13"/>
</dbReference>
<dbReference type="eggNOG" id="KOG1733">
    <property type="taxonomic scope" value="Eukaryota"/>
</dbReference>
<dbReference type="HOGENOM" id="CLU_141397_0_2_1"/>
<dbReference type="InParanoid" id="P62076"/>
<dbReference type="OrthoDB" id="53870at9989"/>
<dbReference type="PhylomeDB" id="P62076"/>
<dbReference type="TreeFam" id="TF106194"/>
<dbReference type="PRO" id="PR:P62076"/>
<dbReference type="Proteomes" id="UP000002494">
    <property type="component" value="Chromosome 7"/>
</dbReference>
<dbReference type="Bgee" id="ENSRNOG00000019682">
    <property type="expression patterns" value="Expressed in pancreas and 19 other cell types or tissues"/>
</dbReference>
<dbReference type="GO" id="GO:0005743">
    <property type="term" value="C:mitochondrial inner membrane"/>
    <property type="evidence" value="ECO:0000266"/>
    <property type="project" value="RGD"/>
</dbReference>
<dbReference type="GO" id="GO:0042719">
    <property type="term" value="C:mitochondrial intermembrane space protein transporter complex"/>
    <property type="evidence" value="ECO:0000266"/>
    <property type="project" value="RGD"/>
</dbReference>
<dbReference type="GO" id="GO:0046872">
    <property type="term" value="F:metal ion binding"/>
    <property type="evidence" value="ECO:0007669"/>
    <property type="project" value="UniProtKB-KW"/>
</dbReference>
<dbReference type="GO" id="GO:0045039">
    <property type="term" value="P:protein insertion into mitochondrial inner membrane"/>
    <property type="evidence" value="ECO:0000266"/>
    <property type="project" value="RGD"/>
</dbReference>
<dbReference type="FunFam" id="1.10.287.810:FF:000001">
    <property type="entry name" value="mitochondrial import inner membrane translocase subunit TIM13"/>
    <property type="match status" value="1"/>
</dbReference>
<dbReference type="Gene3D" id="1.10.287.810">
    <property type="entry name" value="Mitochondrial import inner membrane translocase subunit tim13 like domains"/>
    <property type="match status" value="1"/>
</dbReference>
<dbReference type="InterPro" id="IPR004217">
    <property type="entry name" value="Tim10-like"/>
</dbReference>
<dbReference type="InterPro" id="IPR035427">
    <property type="entry name" value="Tim10-like_dom_sf"/>
</dbReference>
<dbReference type="Pfam" id="PF02953">
    <property type="entry name" value="zf-Tim10_DDP"/>
    <property type="match status" value="1"/>
</dbReference>
<dbReference type="SUPFAM" id="SSF144122">
    <property type="entry name" value="Tim10-like"/>
    <property type="match status" value="1"/>
</dbReference>
<accession>P62076</accession>
<accession>Q9UHL8</accession>
<accession>Q9WTL1</accession>
<keyword id="KW-0007">Acetylation</keyword>
<keyword id="KW-0143">Chaperone</keyword>
<keyword id="KW-1015">Disulfide bond</keyword>
<keyword id="KW-0472">Membrane</keyword>
<keyword id="KW-0479">Metal-binding</keyword>
<keyword id="KW-0496">Mitochondrion</keyword>
<keyword id="KW-0999">Mitochondrion inner membrane</keyword>
<keyword id="KW-0597">Phosphoprotein</keyword>
<keyword id="KW-0653">Protein transport</keyword>
<keyword id="KW-1185">Reference proteome</keyword>
<keyword id="KW-0811">Translocation</keyword>
<keyword id="KW-0813">Transport</keyword>
<keyword id="KW-0862">Zinc</keyword>
<organism>
    <name type="scientific">Rattus norvegicus</name>
    <name type="common">Rat</name>
    <dbReference type="NCBI Taxonomy" id="10116"/>
    <lineage>
        <taxon>Eukaryota</taxon>
        <taxon>Metazoa</taxon>
        <taxon>Chordata</taxon>
        <taxon>Craniata</taxon>
        <taxon>Vertebrata</taxon>
        <taxon>Euteleostomi</taxon>
        <taxon>Mammalia</taxon>
        <taxon>Eutheria</taxon>
        <taxon>Euarchontoglires</taxon>
        <taxon>Glires</taxon>
        <taxon>Rodentia</taxon>
        <taxon>Myomorpha</taxon>
        <taxon>Muroidea</taxon>
        <taxon>Muridae</taxon>
        <taxon>Murinae</taxon>
        <taxon>Rattus</taxon>
    </lineage>
</organism>
<protein>
    <recommendedName>
        <fullName>Mitochondrial import inner membrane translocase subunit Tim13</fullName>
    </recommendedName>
</protein>
<name>TIM13_RAT</name>
<comment type="function">
    <text evidence="1">Mitochondrial intermembrane chaperone that participates in the import and insertion of some multi-pass transmembrane proteins into the mitochondrial inner membrane. Also required for the transfer of beta-barrel precursors from the TOM complex to the sorting and assembly machinery (SAM complex) of the outer membrane. Acts as a chaperone-like protein that protects the hydrophobic precursors from aggregation and guide them through the mitochondrial intermembrane space. The TIMM8-TIMM13 complex mediates the import of proteins such as TIMM23, SLC25A12/ARALAR1 and SLC25A13/ARALAR2, while the predominant TIMM9-TIMM10 70 kDa complex mediates the import of much more proteins (By similarity).</text>
</comment>
<comment type="subunit">
    <text evidence="1">Heterohexamer; composed of 3 copies of TIMM8 (TIMM8A or TIMM8B) and 3 copies of TIMM13, named soluble 70 kDa complex. Associates with the TIM22 complex, whose core is composed of TIMM22 (By similarity).</text>
</comment>
<comment type="subcellular location">
    <subcellularLocation>
        <location evidence="1">Mitochondrion inner membrane</location>
        <topology evidence="1">Peripheral membrane protein</topology>
        <orientation evidence="1">Intermembrane side</orientation>
    </subcellularLocation>
</comment>
<comment type="domain">
    <text evidence="1">The twin CX3C motif contains 4 conserved Cys residues that form 2 disulfide bonds in the mitochondrial intermembrane space. However, during the transit of TIMM13 from cytoplasm into mitochondrion, the Cys residues probably coordinate zinc, thereby preventing folding and allowing its transfer across mitochondrial outer membrane (By similarity).</text>
</comment>
<comment type="similarity">
    <text evidence="4">Belongs to the small Tim family.</text>
</comment>
<gene>
    <name type="primary">Timm13</name>
    <name type="synonym">Tim13a</name>
    <name type="synonym">Timm13a</name>
</gene>
<evidence type="ECO:0000250" key="1"/>
<evidence type="ECO:0000250" key="2">
    <source>
        <dbReference type="UniProtKB" id="P62075"/>
    </source>
</evidence>
<evidence type="ECO:0000250" key="3">
    <source>
        <dbReference type="UniProtKB" id="Q9Y5L4"/>
    </source>
</evidence>
<evidence type="ECO:0000305" key="4"/>